<proteinExistence type="inferred from homology"/>
<keyword id="KW-0029">Amino-acid transport</keyword>
<keyword id="KW-0997">Cell inner membrane</keyword>
<keyword id="KW-1003">Cell membrane</keyword>
<keyword id="KW-0472">Membrane</keyword>
<keyword id="KW-0812">Transmembrane</keyword>
<keyword id="KW-1133">Transmembrane helix</keyword>
<keyword id="KW-0813">Transport</keyword>
<name>AROP_SALTI</name>
<feature type="chain" id="PRO_0000054196" description="Aromatic amino acid transport protein AroP">
    <location>
        <begin position="1"/>
        <end position="457"/>
    </location>
</feature>
<feature type="topological domain" description="Cytoplasmic" evidence="2">
    <location>
        <begin position="1"/>
        <end position="20"/>
    </location>
</feature>
<feature type="transmembrane region" description="Helical" evidence="2">
    <location>
        <begin position="21"/>
        <end position="41"/>
    </location>
</feature>
<feature type="topological domain" description="Periplasmic" evidence="2">
    <location>
        <position position="42"/>
    </location>
</feature>
<feature type="transmembrane region" description="Helical" evidence="2">
    <location>
        <begin position="43"/>
        <end position="63"/>
    </location>
</feature>
<feature type="topological domain" description="Cytoplasmic" evidence="2">
    <location>
        <begin position="64"/>
        <end position="86"/>
    </location>
</feature>
<feature type="transmembrane region" description="Helical" evidence="2">
    <location>
        <begin position="87"/>
        <end position="107"/>
    </location>
</feature>
<feature type="topological domain" description="Periplasmic" evidence="2">
    <location>
        <begin position="108"/>
        <end position="117"/>
    </location>
</feature>
<feature type="transmembrane region" description="Helical" evidence="2">
    <location>
        <begin position="118"/>
        <end position="138"/>
    </location>
</feature>
<feature type="topological domain" description="Cytoplasmic" evidence="2">
    <location>
        <begin position="139"/>
        <end position="155"/>
    </location>
</feature>
<feature type="transmembrane region" description="Helical" evidence="2">
    <location>
        <begin position="156"/>
        <end position="176"/>
    </location>
</feature>
<feature type="topological domain" description="Periplasmic" evidence="2">
    <location>
        <begin position="177"/>
        <end position="201"/>
    </location>
</feature>
<feature type="transmembrane region" description="Helical" evidence="2">
    <location>
        <begin position="202"/>
        <end position="222"/>
    </location>
</feature>
<feature type="topological domain" description="Cytoplasmic" evidence="2">
    <location>
        <begin position="223"/>
        <end position="240"/>
    </location>
</feature>
<feature type="transmembrane region" description="Helical" evidence="2">
    <location>
        <begin position="241"/>
        <end position="261"/>
    </location>
</feature>
<feature type="topological domain" description="Periplasmic" evidence="2">
    <location>
        <begin position="262"/>
        <end position="271"/>
    </location>
</feature>
<feature type="transmembrane region" description="Helical" evidence="2">
    <location>
        <begin position="272"/>
        <end position="292"/>
    </location>
</feature>
<feature type="topological domain" description="Cytoplasmic" evidence="2">
    <location>
        <begin position="293"/>
        <end position="333"/>
    </location>
</feature>
<feature type="transmembrane region" description="Helical" evidence="2">
    <location>
        <begin position="334"/>
        <end position="354"/>
    </location>
</feature>
<feature type="topological domain" description="Periplasmic" evidence="2">
    <location>
        <begin position="355"/>
        <end position="358"/>
    </location>
</feature>
<feature type="transmembrane region" description="Helical" evidence="2">
    <location>
        <begin position="359"/>
        <end position="379"/>
    </location>
</feature>
<feature type="topological domain" description="Cytoplasmic" evidence="2">
    <location>
        <begin position="380"/>
        <end position="400"/>
    </location>
</feature>
<feature type="transmembrane region" description="Helical" evidence="2">
    <location>
        <begin position="401"/>
        <end position="421"/>
    </location>
</feature>
<feature type="topological domain" description="Periplasmic" evidence="2">
    <location>
        <begin position="422"/>
        <end position="425"/>
    </location>
</feature>
<feature type="transmembrane region" description="Helical" evidence="2">
    <location>
        <begin position="426"/>
        <end position="446"/>
    </location>
</feature>
<feature type="topological domain" description="Cytoplasmic" evidence="2">
    <location>
        <begin position="447"/>
        <end position="457"/>
    </location>
</feature>
<protein>
    <recommendedName>
        <fullName evidence="1">Aromatic amino acid transport protein AroP</fullName>
    </recommendedName>
    <alternativeName>
        <fullName evidence="1">Aromatic amino acid:H(+) symporter AroP</fullName>
    </alternativeName>
    <alternativeName>
        <fullName evidence="1">General aromatic amino acid permease</fullName>
    </alternativeName>
</protein>
<comment type="function">
    <text evidence="1">Permease that is involved in the active transport across the cytoplasmic membrane of all three aromatic amino acids, phenylalanine, tyrosine and tryptophan.</text>
</comment>
<comment type="catalytic activity">
    <reaction evidence="1">
        <text>L-phenylalanine(in) + H(+)(in) = L-phenylalanine(out) + H(+)(out)</text>
        <dbReference type="Rhea" id="RHEA:28923"/>
        <dbReference type="ChEBI" id="CHEBI:15378"/>
        <dbReference type="ChEBI" id="CHEBI:58095"/>
    </reaction>
    <physiologicalReaction direction="right-to-left" evidence="1">
        <dbReference type="Rhea" id="RHEA:28925"/>
    </physiologicalReaction>
</comment>
<comment type="catalytic activity">
    <reaction evidence="1">
        <text>L-tryptophan(in) + H(+)(in) = L-tryptophan(out) + H(+)(out)</text>
        <dbReference type="Rhea" id="RHEA:28879"/>
        <dbReference type="ChEBI" id="CHEBI:15378"/>
        <dbReference type="ChEBI" id="CHEBI:57912"/>
    </reaction>
    <physiologicalReaction direction="right-to-left" evidence="1">
        <dbReference type="Rhea" id="RHEA:28881"/>
    </physiologicalReaction>
</comment>
<comment type="catalytic activity">
    <reaction evidence="1">
        <text>L-tyrosine(in) + H(+)(in) = L-tyrosine(out) + H(+)(out)</text>
        <dbReference type="Rhea" id="RHEA:28875"/>
        <dbReference type="ChEBI" id="CHEBI:15378"/>
        <dbReference type="ChEBI" id="CHEBI:58315"/>
    </reaction>
    <physiologicalReaction direction="right-to-left" evidence="1">
        <dbReference type="Rhea" id="RHEA:28877"/>
    </physiologicalReaction>
</comment>
<comment type="subcellular location">
    <subcellularLocation>
        <location evidence="1">Cell inner membrane</location>
        <topology evidence="1">Multi-pass membrane protein</topology>
    </subcellularLocation>
</comment>
<comment type="similarity">
    <text evidence="3">Belongs to the amino acid-polyamine-organocation (APC) superfamily. Amino acid transporter (AAT) (TC 2.A.3.1) family.</text>
</comment>
<comment type="sequence caution" evidence="3">
    <conflict type="erroneous initiation">
        <sequence resource="EMBL-CDS" id="AAO67888"/>
    </conflict>
    <text>Truncated N-terminus.</text>
</comment>
<comment type="sequence caution" evidence="3">
    <conflict type="erroneous initiation">
        <sequence resource="EMBL-CDS" id="CAD01309"/>
    </conflict>
    <text>Truncated N-terminus.</text>
</comment>
<dbReference type="EMBL" id="AL513382">
    <property type="protein sequence ID" value="CAD01309.1"/>
    <property type="status" value="ALT_INIT"/>
    <property type="molecule type" value="Genomic_DNA"/>
</dbReference>
<dbReference type="EMBL" id="AE014613">
    <property type="protein sequence ID" value="AAO67888.1"/>
    <property type="status" value="ALT_INIT"/>
    <property type="molecule type" value="Genomic_DNA"/>
</dbReference>
<dbReference type="RefSeq" id="NP_454764.1">
    <property type="nucleotide sequence ID" value="NC_003198.1"/>
</dbReference>
<dbReference type="RefSeq" id="WP_000969487.1">
    <property type="nucleotide sequence ID" value="NZ_WSUR01000009.1"/>
</dbReference>
<dbReference type="SMR" id="P0A188"/>
<dbReference type="STRING" id="220341.gene:17584211"/>
<dbReference type="KEGG" id="stt:t0156"/>
<dbReference type="KEGG" id="sty:STY0173"/>
<dbReference type="PATRIC" id="fig|220341.7.peg.174"/>
<dbReference type="eggNOG" id="COG1113">
    <property type="taxonomic scope" value="Bacteria"/>
</dbReference>
<dbReference type="HOGENOM" id="CLU_007946_9_3_6"/>
<dbReference type="OMA" id="LFKALWY"/>
<dbReference type="OrthoDB" id="5297508at2"/>
<dbReference type="Proteomes" id="UP000000541">
    <property type="component" value="Chromosome"/>
</dbReference>
<dbReference type="Proteomes" id="UP000002670">
    <property type="component" value="Chromosome"/>
</dbReference>
<dbReference type="GO" id="GO:0005886">
    <property type="term" value="C:plasma membrane"/>
    <property type="evidence" value="ECO:0007669"/>
    <property type="project" value="UniProtKB-SubCell"/>
</dbReference>
<dbReference type="GO" id="GO:0006865">
    <property type="term" value="P:amino acid transport"/>
    <property type="evidence" value="ECO:0007669"/>
    <property type="project" value="UniProtKB-KW"/>
</dbReference>
<dbReference type="GO" id="GO:0055085">
    <property type="term" value="P:transmembrane transport"/>
    <property type="evidence" value="ECO:0007669"/>
    <property type="project" value="InterPro"/>
</dbReference>
<dbReference type="FunFam" id="1.20.1740.10:FF:000001">
    <property type="entry name" value="Amino acid permease"/>
    <property type="match status" value="1"/>
</dbReference>
<dbReference type="Gene3D" id="1.20.1740.10">
    <property type="entry name" value="Amino acid/polyamine transporter I"/>
    <property type="match status" value="1"/>
</dbReference>
<dbReference type="InterPro" id="IPR004841">
    <property type="entry name" value="AA-permease/SLC12A_dom"/>
</dbReference>
<dbReference type="InterPro" id="IPR004840">
    <property type="entry name" value="Amino_acid_permease_CS"/>
</dbReference>
<dbReference type="NCBIfam" id="NF007594">
    <property type="entry name" value="PRK10238.1"/>
    <property type="match status" value="1"/>
</dbReference>
<dbReference type="PANTHER" id="PTHR43495:SF4">
    <property type="entry name" value="AROMATIC AMINO ACID TRANSPORT PROTEIN AROP"/>
    <property type="match status" value="1"/>
</dbReference>
<dbReference type="PANTHER" id="PTHR43495">
    <property type="entry name" value="GABA PERMEASE"/>
    <property type="match status" value="1"/>
</dbReference>
<dbReference type="Pfam" id="PF00324">
    <property type="entry name" value="AA_permease"/>
    <property type="match status" value="1"/>
</dbReference>
<dbReference type="PIRSF" id="PIRSF006060">
    <property type="entry name" value="AA_transporter"/>
    <property type="match status" value="1"/>
</dbReference>
<dbReference type="PROSITE" id="PS00218">
    <property type="entry name" value="AMINO_ACID_PERMEASE_1"/>
    <property type="match status" value="1"/>
</dbReference>
<sequence>MMDSQQHGEQLKRGLKNRHIQLIALGGAIGTGLFLGSASVIQSAGPGIILGYAIAGFIAFLIMRQLGEMVVEEPVAGSFSHFAYKYWGGFAGFASGWNYWVLYVLVAMAELTAVGKYIQFWYPEIPTWASAAAFFVIINAINLTNVKVFGEMEFWFAIIKVIAVIAMILFGAWLLFSDTAGPQATVRNLWEQGGFLPHGWTGLVMMMAIIMFSFGGLELVGITAAEADNPEQSIPKATNQVIYRILIFYIGSLAVLLSLLPWTRVTADTSPFVLIFHELGDTFVANALNIVVLTAALSVYNSCVYCNSRMLFGLAQQGNAPKALLNVDKRGVPVSSILVSAVVTALCVLLNYLAPESAFGLLMALVVSALVINWAMISLAHMMFRRAKQQQGVKTRFPALFYPFGNVLCLLFMAAVLIIMLMTPGMAISVWLIPVWLLILGVGYLCKEKTAKTVKAH</sequence>
<accession>P0A188</accession>
<accession>Q8Z9F1</accession>
<accession>Q9L4I0</accession>
<evidence type="ECO:0000250" key="1">
    <source>
        <dbReference type="UniProtKB" id="P15993"/>
    </source>
</evidence>
<evidence type="ECO:0000255" key="2"/>
<evidence type="ECO:0000305" key="3"/>
<evidence type="ECO:0000312" key="4">
    <source>
        <dbReference type="EMBL" id="AAO67888.1"/>
    </source>
</evidence>
<evidence type="ECO:0000312" key="5">
    <source>
        <dbReference type="EMBL" id="CAD01309.1"/>
    </source>
</evidence>
<reference key="1">
    <citation type="journal article" date="2001" name="Nature">
        <title>Complete genome sequence of a multiple drug resistant Salmonella enterica serovar Typhi CT18.</title>
        <authorList>
            <person name="Parkhill J."/>
            <person name="Dougan G."/>
            <person name="James K.D."/>
            <person name="Thomson N.R."/>
            <person name="Pickard D."/>
            <person name="Wain J."/>
            <person name="Churcher C.M."/>
            <person name="Mungall K.L."/>
            <person name="Bentley S.D."/>
            <person name="Holden M.T.G."/>
            <person name="Sebaihia M."/>
            <person name="Baker S."/>
            <person name="Basham D."/>
            <person name="Brooks K."/>
            <person name="Chillingworth T."/>
            <person name="Connerton P."/>
            <person name="Cronin A."/>
            <person name="Davis P."/>
            <person name="Davies R.M."/>
            <person name="Dowd L."/>
            <person name="White N."/>
            <person name="Farrar J."/>
            <person name="Feltwell T."/>
            <person name="Hamlin N."/>
            <person name="Haque A."/>
            <person name="Hien T.T."/>
            <person name="Holroyd S."/>
            <person name="Jagels K."/>
            <person name="Krogh A."/>
            <person name="Larsen T.S."/>
            <person name="Leather S."/>
            <person name="Moule S."/>
            <person name="O'Gaora P."/>
            <person name="Parry C."/>
            <person name="Quail M.A."/>
            <person name="Rutherford K.M."/>
            <person name="Simmonds M."/>
            <person name="Skelton J."/>
            <person name="Stevens K."/>
            <person name="Whitehead S."/>
            <person name="Barrell B.G."/>
        </authorList>
    </citation>
    <scope>NUCLEOTIDE SEQUENCE [LARGE SCALE GENOMIC DNA]</scope>
    <source>
        <strain>CT18</strain>
    </source>
</reference>
<reference key="2">
    <citation type="journal article" date="2003" name="J. Bacteriol.">
        <title>Comparative genomics of Salmonella enterica serovar Typhi strains Ty2 and CT18.</title>
        <authorList>
            <person name="Deng W."/>
            <person name="Liou S.-R."/>
            <person name="Plunkett G. III"/>
            <person name="Mayhew G.F."/>
            <person name="Rose D.J."/>
            <person name="Burland V."/>
            <person name="Kodoyianni V."/>
            <person name="Schwartz D.C."/>
            <person name="Blattner F.R."/>
        </authorList>
    </citation>
    <scope>NUCLEOTIDE SEQUENCE [LARGE SCALE GENOMIC DNA]</scope>
    <source>
        <strain>ATCC 700931 / Ty2</strain>
    </source>
</reference>
<organism>
    <name type="scientific">Salmonella typhi</name>
    <dbReference type="NCBI Taxonomy" id="90370"/>
    <lineage>
        <taxon>Bacteria</taxon>
        <taxon>Pseudomonadati</taxon>
        <taxon>Pseudomonadota</taxon>
        <taxon>Gammaproteobacteria</taxon>
        <taxon>Enterobacterales</taxon>
        <taxon>Enterobacteriaceae</taxon>
        <taxon>Salmonella</taxon>
    </lineage>
</organism>
<gene>
    <name type="primary">aroP</name>
    <name evidence="5" type="ordered locus">STY0173</name>
    <name evidence="4" type="ordered locus">t0156</name>
</gene>